<dbReference type="EMBL" id="L77117">
    <property type="protein sequence ID" value="AAB98039.1"/>
    <property type="molecule type" value="Genomic_DNA"/>
</dbReference>
<dbReference type="PIR" id="E64306">
    <property type="entry name" value="E64306"/>
</dbReference>
<dbReference type="STRING" id="243232.MJ_0053"/>
<dbReference type="PaxDb" id="243232-MJ_0053"/>
<dbReference type="EnsemblBacteria" id="AAB98039">
    <property type="protein sequence ID" value="AAB98039"/>
    <property type="gene ID" value="MJ_0053"/>
</dbReference>
<dbReference type="KEGG" id="mja:MJ_0053"/>
<dbReference type="eggNOG" id="arCOG05019">
    <property type="taxonomic scope" value="Archaea"/>
</dbReference>
<dbReference type="HOGENOM" id="CLU_1259105_0_0_2"/>
<dbReference type="InParanoid" id="Q60360"/>
<dbReference type="PhylomeDB" id="Q60360"/>
<dbReference type="Proteomes" id="UP000000805">
    <property type="component" value="Chromosome"/>
</dbReference>
<dbReference type="GO" id="GO:0005524">
    <property type="term" value="F:ATP binding"/>
    <property type="evidence" value="ECO:0007669"/>
    <property type="project" value="UniProtKB-KW"/>
</dbReference>
<dbReference type="GO" id="GO:0043828">
    <property type="term" value="F:tRNA 2-selenouridine synthase activity"/>
    <property type="evidence" value="ECO:0007669"/>
    <property type="project" value="InterPro"/>
</dbReference>
<dbReference type="GO" id="GO:0002098">
    <property type="term" value="P:tRNA wobble uridine modification"/>
    <property type="evidence" value="ECO:0007669"/>
    <property type="project" value="InterPro"/>
</dbReference>
<dbReference type="Gene3D" id="3.40.50.300">
    <property type="entry name" value="P-loop containing nucleotide triphosphate hydrolases"/>
    <property type="match status" value="1"/>
</dbReference>
<dbReference type="InterPro" id="IPR030815">
    <property type="entry name" value="Arch_SelU_Cterm"/>
</dbReference>
<dbReference type="InterPro" id="IPR027417">
    <property type="entry name" value="P-loop_NTPase"/>
</dbReference>
<dbReference type="InterPro" id="IPR017582">
    <property type="entry name" value="SelU"/>
</dbReference>
<dbReference type="NCBIfam" id="TIGR04569">
    <property type="entry name" value="arch_SelU_Cterm"/>
    <property type="match status" value="1"/>
</dbReference>
<dbReference type="PANTHER" id="PTHR30401">
    <property type="entry name" value="TRNA 2-SELENOURIDINE SYNTHASE"/>
    <property type="match status" value="1"/>
</dbReference>
<dbReference type="PANTHER" id="PTHR30401:SF0">
    <property type="entry name" value="TRNA 2-SELENOURIDINE SYNTHASE"/>
    <property type="match status" value="1"/>
</dbReference>
<dbReference type="SUPFAM" id="SSF52540">
    <property type="entry name" value="P-loop containing nucleoside triphosphate hydrolases"/>
    <property type="match status" value="1"/>
</dbReference>
<keyword id="KW-0067">ATP-binding</keyword>
<keyword id="KW-0547">Nucleotide-binding</keyword>
<keyword id="KW-1185">Reference proteome</keyword>
<accession>Q60360</accession>
<reference key="1">
    <citation type="journal article" date="1996" name="Science">
        <title>Complete genome sequence of the methanogenic archaeon, Methanococcus jannaschii.</title>
        <authorList>
            <person name="Bult C.J."/>
            <person name="White O."/>
            <person name="Olsen G.J."/>
            <person name="Zhou L."/>
            <person name="Fleischmann R.D."/>
            <person name="Sutton G.G."/>
            <person name="Blake J.A."/>
            <person name="FitzGerald L.M."/>
            <person name="Clayton R.A."/>
            <person name="Gocayne J.D."/>
            <person name="Kerlavage A.R."/>
            <person name="Dougherty B.A."/>
            <person name="Tomb J.-F."/>
            <person name="Adams M.D."/>
            <person name="Reich C.I."/>
            <person name="Overbeek R."/>
            <person name="Kirkness E.F."/>
            <person name="Weinstock K.G."/>
            <person name="Merrick J.M."/>
            <person name="Glodek A."/>
            <person name="Scott J.L."/>
            <person name="Geoghagen N.S.M."/>
            <person name="Weidman J.F."/>
            <person name="Fuhrmann J.L."/>
            <person name="Nguyen D."/>
            <person name="Utterback T.R."/>
            <person name="Kelley J.M."/>
            <person name="Peterson J.D."/>
            <person name="Sadow P.W."/>
            <person name="Hanna M.C."/>
            <person name="Cotton M.D."/>
            <person name="Roberts K.M."/>
            <person name="Hurst M.A."/>
            <person name="Kaine B.P."/>
            <person name="Borodovsky M."/>
            <person name="Klenk H.-P."/>
            <person name="Fraser C.M."/>
            <person name="Smith H.O."/>
            <person name="Woese C.R."/>
            <person name="Venter J.C."/>
        </authorList>
    </citation>
    <scope>NUCLEOTIDE SEQUENCE [LARGE SCALE GENOMIC DNA]</scope>
    <source>
        <strain>ATCC 43067 / DSM 2661 / JAL-1 / JCM 10045 / NBRC 100440</strain>
    </source>
</reference>
<feature type="chain" id="PRO_0000106671" description="Uncharacterized protein MJ0053">
    <location>
        <begin position="1"/>
        <end position="227"/>
    </location>
</feature>
<feature type="binding site" evidence="1">
    <location>
        <begin position="17"/>
        <end position="24"/>
    </location>
    <ligand>
        <name>ATP</name>
        <dbReference type="ChEBI" id="CHEBI:30616"/>
    </ligand>
</feature>
<organism>
    <name type="scientific">Methanocaldococcus jannaschii (strain ATCC 43067 / DSM 2661 / JAL-1 / JCM 10045 / NBRC 100440)</name>
    <name type="common">Methanococcus jannaschii</name>
    <dbReference type="NCBI Taxonomy" id="243232"/>
    <lineage>
        <taxon>Archaea</taxon>
        <taxon>Methanobacteriati</taxon>
        <taxon>Methanobacteriota</taxon>
        <taxon>Methanomada group</taxon>
        <taxon>Methanococci</taxon>
        <taxon>Methanococcales</taxon>
        <taxon>Methanocaldococcaceae</taxon>
        <taxon>Methanocaldococcus</taxon>
    </lineage>
</organism>
<sequence>MGLSFNGENMIIFGLFGKTGCGKTEILNELKKHHPVIDIEEIARTRGSILGDLYHLSMRSQEEFDYLINKEIEKAKKFGYAVVEYEGRKIGGEKKLKIPELLADIKNYTYKILIDCPYECQINRLVSIYKPKNEKEKEILINKFLILKESFKKPEMIEAVDNIIELIKQDKYYEAAKLIEEKLYREHYMRNVKKIKPDLIVYNEDVKKSAKIIDEFIKKKLKEHNLI</sequence>
<evidence type="ECO:0000255" key="1"/>
<proteinExistence type="predicted"/>
<name>Y053_METJA</name>
<gene>
    <name type="ordered locus">MJ0053</name>
</gene>
<protein>
    <recommendedName>
        <fullName>Uncharacterized protein MJ0053</fullName>
    </recommendedName>
</protein>